<keyword id="KW-1185">Reference proteome</keyword>
<keyword id="KW-0687">Ribonucleoprotein</keyword>
<keyword id="KW-0689">Ribosomal protein</keyword>
<evidence type="ECO:0000255" key="1">
    <source>
        <dbReference type="HAMAP-Rule" id="MF_00374"/>
    </source>
</evidence>
<evidence type="ECO:0000305" key="2"/>
<protein>
    <recommendedName>
        <fullName evidence="1">Large ribosomal subunit protein uL29</fullName>
    </recommendedName>
    <alternativeName>
        <fullName evidence="2">50S ribosomal protein L29</fullName>
    </alternativeName>
</protein>
<proteinExistence type="inferred from homology"/>
<sequence length="63" mass="7097">MKASELRSKDAAELGKELESLLKAQFGLRMQKATQQLANTSQLRNVRRDIARVRTLLTQKAGK</sequence>
<accession>Q2L2B5</accession>
<comment type="similarity">
    <text evidence="1">Belongs to the universal ribosomal protein uL29 family.</text>
</comment>
<feature type="chain" id="PRO_1000007420" description="Large ribosomal subunit protein uL29">
    <location>
        <begin position="1"/>
        <end position="63"/>
    </location>
</feature>
<organism>
    <name type="scientific">Bordetella avium (strain 197N)</name>
    <dbReference type="NCBI Taxonomy" id="360910"/>
    <lineage>
        <taxon>Bacteria</taxon>
        <taxon>Pseudomonadati</taxon>
        <taxon>Pseudomonadota</taxon>
        <taxon>Betaproteobacteria</taxon>
        <taxon>Burkholderiales</taxon>
        <taxon>Alcaligenaceae</taxon>
        <taxon>Bordetella</taxon>
    </lineage>
</organism>
<name>RL29_BORA1</name>
<gene>
    <name evidence="1" type="primary">rpmC</name>
    <name type="ordered locus">BAV0033</name>
</gene>
<reference key="1">
    <citation type="journal article" date="2006" name="J. Bacteriol.">
        <title>Comparison of the genome sequence of the poultry pathogen Bordetella avium with those of B. bronchiseptica, B. pertussis, and B. parapertussis reveals extensive diversity in surface structures associated with host interaction.</title>
        <authorList>
            <person name="Sebaihia M."/>
            <person name="Preston A."/>
            <person name="Maskell D.J."/>
            <person name="Kuzmiak H."/>
            <person name="Connell T.D."/>
            <person name="King N.D."/>
            <person name="Orndorff P.E."/>
            <person name="Miyamoto D.M."/>
            <person name="Thomson N.R."/>
            <person name="Harris D."/>
            <person name="Goble A."/>
            <person name="Lord A."/>
            <person name="Murphy L."/>
            <person name="Quail M.A."/>
            <person name="Rutter S."/>
            <person name="Squares R."/>
            <person name="Squares S."/>
            <person name="Woodward J."/>
            <person name="Parkhill J."/>
            <person name="Temple L.M."/>
        </authorList>
    </citation>
    <scope>NUCLEOTIDE SEQUENCE [LARGE SCALE GENOMIC DNA]</scope>
    <source>
        <strain>197N</strain>
    </source>
</reference>
<dbReference type="EMBL" id="AM167904">
    <property type="protein sequence ID" value="CAJ47617.1"/>
    <property type="molecule type" value="Genomic_DNA"/>
</dbReference>
<dbReference type="RefSeq" id="WP_012415740.1">
    <property type="nucleotide sequence ID" value="NC_010645.1"/>
</dbReference>
<dbReference type="SMR" id="Q2L2B5"/>
<dbReference type="STRING" id="360910.BAV0033"/>
<dbReference type="GeneID" id="92996115"/>
<dbReference type="KEGG" id="bav:BAV0033"/>
<dbReference type="eggNOG" id="COG0255">
    <property type="taxonomic scope" value="Bacteria"/>
</dbReference>
<dbReference type="HOGENOM" id="CLU_158491_1_1_4"/>
<dbReference type="OrthoDB" id="9815192at2"/>
<dbReference type="Proteomes" id="UP000001977">
    <property type="component" value="Chromosome"/>
</dbReference>
<dbReference type="GO" id="GO:0022625">
    <property type="term" value="C:cytosolic large ribosomal subunit"/>
    <property type="evidence" value="ECO:0007669"/>
    <property type="project" value="TreeGrafter"/>
</dbReference>
<dbReference type="GO" id="GO:0003735">
    <property type="term" value="F:structural constituent of ribosome"/>
    <property type="evidence" value="ECO:0007669"/>
    <property type="project" value="InterPro"/>
</dbReference>
<dbReference type="GO" id="GO:0006412">
    <property type="term" value="P:translation"/>
    <property type="evidence" value="ECO:0007669"/>
    <property type="project" value="UniProtKB-UniRule"/>
</dbReference>
<dbReference type="CDD" id="cd00427">
    <property type="entry name" value="Ribosomal_L29_HIP"/>
    <property type="match status" value="1"/>
</dbReference>
<dbReference type="FunFam" id="1.10.287.310:FF:000001">
    <property type="entry name" value="50S ribosomal protein L29"/>
    <property type="match status" value="1"/>
</dbReference>
<dbReference type="Gene3D" id="1.10.287.310">
    <property type="match status" value="1"/>
</dbReference>
<dbReference type="HAMAP" id="MF_00374">
    <property type="entry name" value="Ribosomal_uL29"/>
    <property type="match status" value="1"/>
</dbReference>
<dbReference type="InterPro" id="IPR050063">
    <property type="entry name" value="Ribosomal_protein_uL29"/>
</dbReference>
<dbReference type="InterPro" id="IPR001854">
    <property type="entry name" value="Ribosomal_uL29"/>
</dbReference>
<dbReference type="InterPro" id="IPR018254">
    <property type="entry name" value="Ribosomal_uL29_CS"/>
</dbReference>
<dbReference type="InterPro" id="IPR036049">
    <property type="entry name" value="Ribosomal_uL29_sf"/>
</dbReference>
<dbReference type="NCBIfam" id="TIGR00012">
    <property type="entry name" value="L29"/>
    <property type="match status" value="1"/>
</dbReference>
<dbReference type="PANTHER" id="PTHR10916">
    <property type="entry name" value="60S RIBOSOMAL PROTEIN L35/50S RIBOSOMAL PROTEIN L29"/>
    <property type="match status" value="1"/>
</dbReference>
<dbReference type="PANTHER" id="PTHR10916:SF0">
    <property type="entry name" value="LARGE RIBOSOMAL SUBUNIT PROTEIN UL29C"/>
    <property type="match status" value="1"/>
</dbReference>
<dbReference type="Pfam" id="PF00831">
    <property type="entry name" value="Ribosomal_L29"/>
    <property type="match status" value="1"/>
</dbReference>
<dbReference type="SUPFAM" id="SSF46561">
    <property type="entry name" value="Ribosomal protein L29 (L29p)"/>
    <property type="match status" value="1"/>
</dbReference>
<dbReference type="PROSITE" id="PS00579">
    <property type="entry name" value="RIBOSOMAL_L29"/>
    <property type="match status" value="1"/>
</dbReference>